<gene>
    <name type="ORF">si:ch211-147a11.3</name>
</gene>
<reference key="1">
    <citation type="journal article" date="2013" name="Nature">
        <title>The zebrafish reference genome sequence and its relationship to the human genome.</title>
        <authorList>
            <person name="Howe K."/>
            <person name="Clark M.D."/>
            <person name="Torroja C.F."/>
            <person name="Torrance J."/>
            <person name="Berthelot C."/>
            <person name="Muffato M."/>
            <person name="Collins J.E."/>
            <person name="Humphray S."/>
            <person name="McLaren K."/>
            <person name="Matthews L."/>
            <person name="McLaren S."/>
            <person name="Sealy I."/>
            <person name="Caccamo M."/>
            <person name="Churcher C."/>
            <person name="Scott C."/>
            <person name="Barrett J.C."/>
            <person name="Koch R."/>
            <person name="Rauch G.J."/>
            <person name="White S."/>
            <person name="Chow W."/>
            <person name="Kilian B."/>
            <person name="Quintais L.T."/>
            <person name="Guerra-Assuncao J.A."/>
            <person name="Zhou Y."/>
            <person name="Gu Y."/>
            <person name="Yen J."/>
            <person name="Vogel J.H."/>
            <person name="Eyre T."/>
            <person name="Redmond S."/>
            <person name="Banerjee R."/>
            <person name="Chi J."/>
            <person name="Fu B."/>
            <person name="Langley E."/>
            <person name="Maguire S.F."/>
            <person name="Laird G.K."/>
            <person name="Lloyd D."/>
            <person name="Kenyon E."/>
            <person name="Donaldson S."/>
            <person name="Sehra H."/>
            <person name="Almeida-King J."/>
            <person name="Loveland J."/>
            <person name="Trevanion S."/>
            <person name="Jones M."/>
            <person name="Quail M."/>
            <person name="Willey D."/>
            <person name="Hunt A."/>
            <person name="Burton J."/>
            <person name="Sims S."/>
            <person name="McLay K."/>
            <person name="Plumb B."/>
            <person name="Davis J."/>
            <person name="Clee C."/>
            <person name="Oliver K."/>
            <person name="Clark R."/>
            <person name="Riddle C."/>
            <person name="Elliot D."/>
            <person name="Threadgold G."/>
            <person name="Harden G."/>
            <person name="Ware D."/>
            <person name="Begum S."/>
            <person name="Mortimore B."/>
            <person name="Kerry G."/>
            <person name="Heath P."/>
            <person name="Phillimore B."/>
            <person name="Tracey A."/>
            <person name="Corby N."/>
            <person name="Dunn M."/>
            <person name="Johnson C."/>
            <person name="Wood J."/>
            <person name="Clark S."/>
            <person name="Pelan S."/>
            <person name="Griffiths G."/>
            <person name="Smith M."/>
            <person name="Glithero R."/>
            <person name="Howden P."/>
            <person name="Barker N."/>
            <person name="Lloyd C."/>
            <person name="Stevens C."/>
            <person name="Harley J."/>
            <person name="Holt K."/>
            <person name="Panagiotidis G."/>
            <person name="Lovell J."/>
            <person name="Beasley H."/>
            <person name="Henderson C."/>
            <person name="Gordon D."/>
            <person name="Auger K."/>
            <person name="Wright D."/>
            <person name="Collins J."/>
            <person name="Raisen C."/>
            <person name="Dyer L."/>
            <person name="Leung K."/>
            <person name="Robertson L."/>
            <person name="Ambridge K."/>
            <person name="Leongamornlert D."/>
            <person name="McGuire S."/>
            <person name="Gilderthorp R."/>
            <person name="Griffiths C."/>
            <person name="Manthravadi D."/>
            <person name="Nichol S."/>
            <person name="Barker G."/>
            <person name="Whitehead S."/>
            <person name="Kay M."/>
            <person name="Brown J."/>
            <person name="Murnane C."/>
            <person name="Gray E."/>
            <person name="Humphries M."/>
            <person name="Sycamore N."/>
            <person name="Barker D."/>
            <person name="Saunders D."/>
            <person name="Wallis J."/>
            <person name="Babbage A."/>
            <person name="Hammond S."/>
            <person name="Mashreghi-Mohammadi M."/>
            <person name="Barr L."/>
            <person name="Martin S."/>
            <person name="Wray P."/>
            <person name="Ellington A."/>
            <person name="Matthews N."/>
            <person name="Ellwood M."/>
            <person name="Woodmansey R."/>
            <person name="Clark G."/>
            <person name="Cooper J."/>
            <person name="Tromans A."/>
            <person name="Grafham D."/>
            <person name="Skuce C."/>
            <person name="Pandian R."/>
            <person name="Andrews R."/>
            <person name="Harrison E."/>
            <person name="Kimberley A."/>
            <person name="Garnett J."/>
            <person name="Fosker N."/>
            <person name="Hall R."/>
            <person name="Garner P."/>
            <person name="Kelly D."/>
            <person name="Bird C."/>
            <person name="Palmer S."/>
            <person name="Gehring I."/>
            <person name="Berger A."/>
            <person name="Dooley C.M."/>
            <person name="Ersan-Urun Z."/>
            <person name="Eser C."/>
            <person name="Geiger H."/>
            <person name="Geisler M."/>
            <person name="Karotki L."/>
            <person name="Kirn A."/>
            <person name="Konantz J."/>
            <person name="Konantz M."/>
            <person name="Oberlander M."/>
            <person name="Rudolph-Geiger S."/>
            <person name="Teucke M."/>
            <person name="Lanz C."/>
            <person name="Raddatz G."/>
            <person name="Osoegawa K."/>
            <person name="Zhu B."/>
            <person name="Rapp A."/>
            <person name="Widaa S."/>
            <person name="Langford C."/>
            <person name="Yang F."/>
            <person name="Schuster S.C."/>
            <person name="Carter N.P."/>
            <person name="Harrow J."/>
            <person name="Ning Z."/>
            <person name="Herrero J."/>
            <person name="Searle S.M."/>
            <person name="Enright A."/>
            <person name="Geisler R."/>
            <person name="Plasterk R.H."/>
            <person name="Lee C."/>
            <person name="Westerfield M."/>
            <person name="de Jong P.J."/>
            <person name="Zon L.I."/>
            <person name="Postlethwait J.H."/>
            <person name="Nusslein-Volhard C."/>
            <person name="Hubbard T.J."/>
            <person name="Roest Crollius H."/>
            <person name="Rogers J."/>
            <person name="Stemple D.L."/>
        </authorList>
    </citation>
    <scope>NUCLEOTIDE SEQUENCE [LARGE SCALE GENOMIC DNA]</scope>
    <scope>ALTERNATIVE SPLICING</scope>
    <source>
        <strain>Tuebingen</strain>
    </source>
</reference>
<reference key="2">
    <citation type="submission" date="2007-10" db="EMBL/GenBank/DDBJ databases">
        <authorList>
            <consortium name="NIH - Zebrafish Gene Collection (ZGC) project"/>
        </authorList>
    </citation>
    <scope>NUCLEOTIDE SEQUENCE [LARGE SCALE MRNA] (ISOFORM 1)</scope>
    <source>
        <tissue>Ovary</tissue>
    </source>
</reference>
<sequence>MRAKQTVVVSLGQRVCGAVSLNPPGVKSSVKKAAKRRVLLQRSAPDIARAVRQMAGDGGEAKRLPKRPFHGEVEENSSAAVDGNVKIQPGKKAPGERRGKENSAAKCTGLTSGSAEAKMEQSVHGSQTTDPSVFFDEDSNHVFPVEQFFGNLDVVEDYPRRTPGSKRMTRREYRSMHYYAKEDSEEEHL</sequence>
<accession>Q1L9C7</accession>
<accession>A5PL76</accession>
<accession>A8KBU8</accession>
<accession>Q1L9C8</accession>
<dbReference type="EMBL" id="CR352301">
    <property type="protein sequence ID" value="CAK04132.1"/>
    <property type="molecule type" value="Genomic_DNA"/>
</dbReference>
<dbReference type="EMBL" id="CR352301">
    <property type="protein sequence ID" value="CAK04133.1"/>
    <property type="molecule type" value="Genomic_DNA"/>
</dbReference>
<dbReference type="EMBL" id="BC142775">
    <property type="protein sequence ID" value="AAI42776.1"/>
    <property type="molecule type" value="mRNA"/>
</dbReference>
<dbReference type="EMBL" id="BC154251">
    <property type="protein sequence ID" value="AAI54252.1"/>
    <property type="status" value="ALT_INIT"/>
    <property type="molecule type" value="mRNA"/>
</dbReference>
<dbReference type="RefSeq" id="NP_001038302.1">
    <molecule id="Q1L9C7-2"/>
    <property type="nucleotide sequence ID" value="NM_001044837.1"/>
</dbReference>
<dbReference type="RefSeq" id="XP_005166959.1">
    <molecule id="Q1L9C7-1"/>
    <property type="nucleotide sequence ID" value="XM_005166902.4"/>
</dbReference>
<dbReference type="STRING" id="7955.ENSDARP00000090818"/>
<dbReference type="PaxDb" id="7955-ENSDARP00000090818"/>
<dbReference type="Ensembl" id="ENSDART00000100046">
    <molecule id="Q1L9C7-1"/>
    <property type="protein sequence ID" value="ENSDARP00000090818"/>
    <property type="gene ID" value="ENSDARG00000069009"/>
</dbReference>
<dbReference type="GeneID" id="795658"/>
<dbReference type="KEGG" id="dre:795658"/>
<dbReference type="AGR" id="ZFIN:ZDB-GENE-060503-102"/>
<dbReference type="ZFIN" id="ZDB-GENE-060503-102">
    <property type="gene designation" value="si:ch211-147a11.3"/>
</dbReference>
<dbReference type="eggNOG" id="ENOG502SANK">
    <property type="taxonomic scope" value="Eukaryota"/>
</dbReference>
<dbReference type="HOGENOM" id="CLU_1626472_0_0_1"/>
<dbReference type="InParanoid" id="Q1L9C7"/>
<dbReference type="OMA" id="RMEEAEC"/>
<dbReference type="OrthoDB" id="8730115at2759"/>
<dbReference type="TreeFam" id="TF336079"/>
<dbReference type="PRO" id="PR:Q1L9C7"/>
<dbReference type="Proteomes" id="UP000000437">
    <property type="component" value="Chromosome 8"/>
</dbReference>
<dbReference type="Bgee" id="ENSDARG00000069009">
    <property type="expression patterns" value="Expressed in cleaving embryo and 29 other cell types or tissues"/>
</dbReference>
<dbReference type="ExpressionAtlas" id="Q1L9C7">
    <property type="expression patterns" value="baseline and differential"/>
</dbReference>
<dbReference type="GO" id="GO:0005634">
    <property type="term" value="C:nucleus"/>
    <property type="evidence" value="ECO:0007669"/>
    <property type="project" value="UniProtKB-SubCell"/>
</dbReference>
<dbReference type="InterPro" id="IPR031530">
    <property type="entry name" value="UPF0688"/>
</dbReference>
<dbReference type="PANTHER" id="PTHR28491">
    <property type="entry name" value="UPF0688 PROTEIN C1ORF174"/>
    <property type="match status" value="1"/>
</dbReference>
<dbReference type="PANTHER" id="PTHR28491:SF1">
    <property type="entry name" value="UPF0688 PROTEIN C1ORF174"/>
    <property type="match status" value="1"/>
</dbReference>
<dbReference type="Pfam" id="PF15772">
    <property type="entry name" value="UPF0688"/>
    <property type="match status" value="1"/>
</dbReference>
<protein>
    <recommendedName>
        <fullName>UPF0688 protein C1orf174 homolog</fullName>
    </recommendedName>
</protein>
<organism>
    <name type="scientific">Danio rerio</name>
    <name type="common">Zebrafish</name>
    <name type="synonym">Brachydanio rerio</name>
    <dbReference type="NCBI Taxonomy" id="7955"/>
    <lineage>
        <taxon>Eukaryota</taxon>
        <taxon>Metazoa</taxon>
        <taxon>Chordata</taxon>
        <taxon>Craniata</taxon>
        <taxon>Vertebrata</taxon>
        <taxon>Euteleostomi</taxon>
        <taxon>Actinopterygii</taxon>
        <taxon>Neopterygii</taxon>
        <taxon>Teleostei</taxon>
        <taxon>Ostariophysi</taxon>
        <taxon>Cypriniformes</taxon>
        <taxon>Danionidae</taxon>
        <taxon>Danioninae</taxon>
        <taxon>Danio</taxon>
    </lineage>
</organism>
<keyword id="KW-0025">Alternative splicing</keyword>
<keyword id="KW-0539">Nucleus</keyword>
<keyword id="KW-1185">Reference proteome</keyword>
<proteinExistence type="evidence at transcript level"/>
<evidence type="ECO:0000250" key="1"/>
<evidence type="ECO:0000256" key="2">
    <source>
        <dbReference type="SAM" id="MobiDB-lite"/>
    </source>
</evidence>
<evidence type="ECO:0000305" key="3"/>
<comment type="subcellular location">
    <subcellularLocation>
        <location evidence="1">Nucleus</location>
    </subcellularLocation>
</comment>
<comment type="alternative products">
    <event type="alternative splicing"/>
    <isoform>
        <id>Q1L9C7-1</id>
        <name>1</name>
        <sequence type="displayed"/>
    </isoform>
    <isoform>
        <id>Q1L9C7-2</id>
        <name>2</name>
        <sequence type="described" ref="VSP_036165"/>
    </isoform>
</comment>
<comment type="similarity">
    <text evidence="3">Belongs to the UPF0688 family.</text>
</comment>
<comment type="sequence caution" evidence="3">
    <conflict type="erroneous initiation">
        <sequence resource="EMBL-CDS" id="AAI54252"/>
    </conflict>
</comment>
<name>CA174_DANRE</name>
<feature type="chain" id="PRO_0000359759" description="UPF0688 protein C1orf174 homolog">
    <location>
        <begin position="1"/>
        <end position="189"/>
    </location>
</feature>
<feature type="region of interest" description="Disordered" evidence="2">
    <location>
        <begin position="53"/>
        <end position="137"/>
    </location>
</feature>
<feature type="compositionally biased region" description="Basic and acidic residues" evidence="2">
    <location>
        <begin position="59"/>
        <end position="73"/>
    </location>
</feature>
<feature type="compositionally biased region" description="Basic and acidic residues" evidence="2">
    <location>
        <begin position="93"/>
        <end position="103"/>
    </location>
</feature>
<feature type="splice variant" id="VSP_036165" description="In isoform 2." evidence="3">
    <location>
        <begin position="6"/>
        <end position="31"/>
    </location>
</feature>
<feature type="sequence conflict" description="In Ref. 2; AAI42776." evidence="3" ref="2">
    <original>K</original>
    <variation>R</variation>
    <location>
        <position position="35"/>
    </location>
</feature>
<feature type="sequence conflict" description="In Ref. 2; AAI42776." evidence="3" ref="2">
    <original>S</original>
    <variation>L</variation>
    <location>
        <position position="126"/>
    </location>
</feature>
<feature type="sequence conflict" description="In Ref. 2; AAI42776." evidence="3" ref="2">
    <original>E</original>
    <variation>D</variation>
    <location>
        <position position="186"/>
    </location>
</feature>